<gene>
    <name evidence="1" type="primary">xseB</name>
    <name type="ordered locus">RPR_06905</name>
</gene>
<keyword id="KW-0963">Cytoplasm</keyword>
<keyword id="KW-0269">Exonuclease</keyword>
<keyword id="KW-0378">Hydrolase</keyword>
<keyword id="KW-0540">Nuclease</keyword>
<sequence>MTNTKTLEANISFEEALKELEEIVKKIDNGQESLETAVNSFERGILLKNHCEKKLKEARLKIEKITKLADSTVVLEEMEV</sequence>
<proteinExistence type="inferred from homology"/>
<accession>C4K2Q1</accession>
<protein>
    <recommendedName>
        <fullName evidence="1">Exodeoxyribonuclease 7 small subunit</fullName>
        <ecNumber evidence="1">3.1.11.6</ecNumber>
    </recommendedName>
    <alternativeName>
        <fullName evidence="1">Exodeoxyribonuclease VII small subunit</fullName>
        <shortName evidence="1">Exonuclease VII small subunit</shortName>
    </alternativeName>
</protein>
<dbReference type="EC" id="3.1.11.6" evidence="1"/>
<dbReference type="EMBL" id="CP001227">
    <property type="protein sequence ID" value="ACR47847.1"/>
    <property type="molecule type" value="Genomic_DNA"/>
</dbReference>
<dbReference type="RefSeq" id="WP_004996011.1">
    <property type="nucleotide sequence ID" value="NC_012730.1"/>
</dbReference>
<dbReference type="SMR" id="C4K2Q1"/>
<dbReference type="KEGG" id="rpk:RPR_06905"/>
<dbReference type="HOGENOM" id="CLU_145918_0_3_5"/>
<dbReference type="Proteomes" id="UP000005015">
    <property type="component" value="Chromosome"/>
</dbReference>
<dbReference type="GO" id="GO:0005829">
    <property type="term" value="C:cytosol"/>
    <property type="evidence" value="ECO:0007669"/>
    <property type="project" value="TreeGrafter"/>
</dbReference>
<dbReference type="GO" id="GO:0009318">
    <property type="term" value="C:exodeoxyribonuclease VII complex"/>
    <property type="evidence" value="ECO:0007669"/>
    <property type="project" value="InterPro"/>
</dbReference>
<dbReference type="GO" id="GO:0008855">
    <property type="term" value="F:exodeoxyribonuclease VII activity"/>
    <property type="evidence" value="ECO:0007669"/>
    <property type="project" value="UniProtKB-UniRule"/>
</dbReference>
<dbReference type="GO" id="GO:0006308">
    <property type="term" value="P:DNA catabolic process"/>
    <property type="evidence" value="ECO:0007669"/>
    <property type="project" value="UniProtKB-UniRule"/>
</dbReference>
<dbReference type="Gene3D" id="1.10.287.1040">
    <property type="entry name" value="Exonuclease VII, small subunit"/>
    <property type="match status" value="1"/>
</dbReference>
<dbReference type="HAMAP" id="MF_00337">
    <property type="entry name" value="Exonuc_7_S"/>
    <property type="match status" value="1"/>
</dbReference>
<dbReference type="InterPro" id="IPR003761">
    <property type="entry name" value="Exonuc_VII_S"/>
</dbReference>
<dbReference type="InterPro" id="IPR037004">
    <property type="entry name" value="Exonuc_VII_ssu_sf"/>
</dbReference>
<dbReference type="NCBIfam" id="NF002139">
    <property type="entry name" value="PRK00977.1-3"/>
    <property type="match status" value="1"/>
</dbReference>
<dbReference type="NCBIfam" id="NF002140">
    <property type="entry name" value="PRK00977.1-4"/>
    <property type="match status" value="1"/>
</dbReference>
<dbReference type="NCBIfam" id="TIGR01280">
    <property type="entry name" value="xseB"/>
    <property type="match status" value="1"/>
</dbReference>
<dbReference type="PANTHER" id="PTHR34137">
    <property type="entry name" value="EXODEOXYRIBONUCLEASE 7 SMALL SUBUNIT"/>
    <property type="match status" value="1"/>
</dbReference>
<dbReference type="PANTHER" id="PTHR34137:SF1">
    <property type="entry name" value="EXODEOXYRIBONUCLEASE 7 SMALL SUBUNIT"/>
    <property type="match status" value="1"/>
</dbReference>
<dbReference type="Pfam" id="PF02609">
    <property type="entry name" value="Exonuc_VII_S"/>
    <property type="match status" value="1"/>
</dbReference>
<dbReference type="PIRSF" id="PIRSF006488">
    <property type="entry name" value="Exonuc_VII_S"/>
    <property type="match status" value="1"/>
</dbReference>
<dbReference type="SUPFAM" id="SSF116842">
    <property type="entry name" value="XseB-like"/>
    <property type="match status" value="1"/>
</dbReference>
<organism>
    <name type="scientific">Rickettsia peacockii (strain Rustic)</name>
    <dbReference type="NCBI Taxonomy" id="562019"/>
    <lineage>
        <taxon>Bacteria</taxon>
        <taxon>Pseudomonadati</taxon>
        <taxon>Pseudomonadota</taxon>
        <taxon>Alphaproteobacteria</taxon>
        <taxon>Rickettsiales</taxon>
        <taxon>Rickettsiaceae</taxon>
        <taxon>Rickettsieae</taxon>
        <taxon>Rickettsia</taxon>
        <taxon>spotted fever group</taxon>
    </lineage>
</organism>
<reference key="1">
    <citation type="journal article" date="2009" name="PLoS ONE">
        <title>Genome sequence of the endosymbiont Rickettsia peacockii and comparison with virulent Rickettsia rickettsii: identification of virulence factors.</title>
        <authorList>
            <person name="Felsheim R.F."/>
            <person name="Kurtti T.J."/>
            <person name="Munderloh U.G."/>
        </authorList>
    </citation>
    <scope>NUCLEOTIDE SEQUENCE [LARGE SCALE GENOMIC DNA]</scope>
    <source>
        <strain>Rustic</strain>
    </source>
</reference>
<name>EX7S_RICPU</name>
<comment type="function">
    <text evidence="1">Bidirectionally degrades single-stranded DNA into large acid-insoluble oligonucleotides, which are then degraded further into small acid-soluble oligonucleotides.</text>
</comment>
<comment type="catalytic activity">
    <reaction evidence="1">
        <text>Exonucleolytic cleavage in either 5'- to 3'- or 3'- to 5'-direction to yield nucleoside 5'-phosphates.</text>
        <dbReference type="EC" id="3.1.11.6"/>
    </reaction>
</comment>
<comment type="subunit">
    <text evidence="1">Heterooligomer composed of large and small subunits.</text>
</comment>
<comment type="subcellular location">
    <subcellularLocation>
        <location evidence="1">Cytoplasm</location>
    </subcellularLocation>
</comment>
<comment type="similarity">
    <text evidence="1">Belongs to the XseB family.</text>
</comment>
<feature type="chain" id="PRO_1000205234" description="Exodeoxyribonuclease 7 small subunit">
    <location>
        <begin position="1"/>
        <end position="80"/>
    </location>
</feature>
<evidence type="ECO:0000255" key="1">
    <source>
        <dbReference type="HAMAP-Rule" id="MF_00337"/>
    </source>
</evidence>